<evidence type="ECO:0000269" key="1">
    <source>
    </source>
</evidence>
<evidence type="ECO:0000305" key="2"/>
<dbReference type="EC" id="3.1.3.-"/>
<dbReference type="EMBL" id="AL009126">
    <property type="protein sequence ID" value="CAB13676.1"/>
    <property type="molecule type" value="Genomic_DNA"/>
</dbReference>
<dbReference type="PIR" id="F69894">
    <property type="entry name" value="F69894"/>
</dbReference>
<dbReference type="RefSeq" id="WP_010886518.1">
    <property type="nucleotide sequence ID" value="NZ_OZ025638.1"/>
</dbReference>
<dbReference type="SMR" id="O31819"/>
<dbReference type="FunCoup" id="O31819">
    <property type="interactions" value="51"/>
</dbReference>
<dbReference type="STRING" id="224308.BSU17920"/>
<dbReference type="PaxDb" id="224308-BSU17920"/>
<dbReference type="EnsemblBacteria" id="CAB13676">
    <property type="protein sequence ID" value="CAB13676"/>
    <property type="gene ID" value="BSU_17920"/>
</dbReference>
<dbReference type="GeneID" id="938818"/>
<dbReference type="KEGG" id="bsu:BSU17920"/>
<dbReference type="PATRIC" id="fig|224308.43.peg.1898"/>
<dbReference type="InParanoid" id="O31819"/>
<dbReference type="OrthoDB" id="2972613at2"/>
<dbReference type="BioCyc" id="BSUB:BSU17920-MONOMER"/>
<dbReference type="Proteomes" id="UP000001570">
    <property type="component" value="Chromosome"/>
</dbReference>
<dbReference type="GO" id="GO:0016787">
    <property type="term" value="F:hydrolase activity"/>
    <property type="evidence" value="ECO:0007669"/>
    <property type="project" value="UniProtKB-KW"/>
</dbReference>
<dbReference type="GO" id="GO:0046983">
    <property type="term" value="F:protein dimerization activity"/>
    <property type="evidence" value="ECO:0007669"/>
    <property type="project" value="InterPro"/>
</dbReference>
<dbReference type="GO" id="GO:0043937">
    <property type="term" value="P:regulation of sporulation"/>
    <property type="evidence" value="ECO:0007669"/>
    <property type="project" value="InterPro"/>
</dbReference>
<dbReference type="GO" id="GO:0030435">
    <property type="term" value="P:sporulation resulting in formation of a cellular spore"/>
    <property type="evidence" value="ECO:0007669"/>
    <property type="project" value="UniProtKB-KW"/>
</dbReference>
<dbReference type="Gene3D" id="4.10.280.10">
    <property type="entry name" value="Helix-loop-helix DNA-binding domain"/>
    <property type="match status" value="1"/>
</dbReference>
<dbReference type="InterPro" id="IPR036638">
    <property type="entry name" value="HLH_DNA-bd_sf"/>
</dbReference>
<dbReference type="InterPro" id="IPR018540">
    <property type="entry name" value="Spo0E-like"/>
</dbReference>
<dbReference type="InterPro" id="IPR053028">
    <property type="entry name" value="Spo0E-like_phosphatase"/>
</dbReference>
<dbReference type="InterPro" id="IPR037208">
    <property type="entry name" value="Spo0E-like_sf"/>
</dbReference>
<dbReference type="PANTHER" id="PTHR41263">
    <property type="entry name" value="ASPARTYL-PHOSPHATE PHOSPHATASE YISI"/>
    <property type="match status" value="1"/>
</dbReference>
<dbReference type="PANTHER" id="PTHR41263:SF1">
    <property type="entry name" value="ASPARTYL-PHOSPHATE PHOSPHATASE YISI"/>
    <property type="match status" value="1"/>
</dbReference>
<dbReference type="Pfam" id="PF09388">
    <property type="entry name" value="SpoOE-like"/>
    <property type="match status" value="1"/>
</dbReference>
<dbReference type="SUPFAM" id="SSF140500">
    <property type="entry name" value="BAS1536-like"/>
    <property type="match status" value="1"/>
</dbReference>
<reference key="1">
    <citation type="journal article" date="1997" name="Nature">
        <title>The complete genome sequence of the Gram-positive bacterium Bacillus subtilis.</title>
        <authorList>
            <person name="Kunst F."/>
            <person name="Ogasawara N."/>
            <person name="Moszer I."/>
            <person name="Albertini A.M."/>
            <person name="Alloni G."/>
            <person name="Azevedo V."/>
            <person name="Bertero M.G."/>
            <person name="Bessieres P."/>
            <person name="Bolotin A."/>
            <person name="Borchert S."/>
            <person name="Borriss R."/>
            <person name="Boursier L."/>
            <person name="Brans A."/>
            <person name="Braun M."/>
            <person name="Brignell S.C."/>
            <person name="Bron S."/>
            <person name="Brouillet S."/>
            <person name="Bruschi C.V."/>
            <person name="Caldwell B."/>
            <person name="Capuano V."/>
            <person name="Carter N.M."/>
            <person name="Choi S.-K."/>
            <person name="Codani J.-J."/>
            <person name="Connerton I.F."/>
            <person name="Cummings N.J."/>
            <person name="Daniel R.A."/>
            <person name="Denizot F."/>
            <person name="Devine K.M."/>
            <person name="Duesterhoeft A."/>
            <person name="Ehrlich S.D."/>
            <person name="Emmerson P.T."/>
            <person name="Entian K.-D."/>
            <person name="Errington J."/>
            <person name="Fabret C."/>
            <person name="Ferrari E."/>
            <person name="Foulger D."/>
            <person name="Fritz C."/>
            <person name="Fujita M."/>
            <person name="Fujita Y."/>
            <person name="Fuma S."/>
            <person name="Galizzi A."/>
            <person name="Galleron N."/>
            <person name="Ghim S.-Y."/>
            <person name="Glaser P."/>
            <person name="Goffeau A."/>
            <person name="Golightly E.J."/>
            <person name="Grandi G."/>
            <person name="Guiseppi G."/>
            <person name="Guy B.J."/>
            <person name="Haga K."/>
            <person name="Haiech J."/>
            <person name="Harwood C.R."/>
            <person name="Henaut A."/>
            <person name="Hilbert H."/>
            <person name="Holsappel S."/>
            <person name="Hosono S."/>
            <person name="Hullo M.-F."/>
            <person name="Itaya M."/>
            <person name="Jones L.-M."/>
            <person name="Joris B."/>
            <person name="Karamata D."/>
            <person name="Kasahara Y."/>
            <person name="Klaerr-Blanchard M."/>
            <person name="Klein C."/>
            <person name="Kobayashi Y."/>
            <person name="Koetter P."/>
            <person name="Koningstein G."/>
            <person name="Krogh S."/>
            <person name="Kumano M."/>
            <person name="Kurita K."/>
            <person name="Lapidus A."/>
            <person name="Lardinois S."/>
            <person name="Lauber J."/>
            <person name="Lazarevic V."/>
            <person name="Lee S.-M."/>
            <person name="Levine A."/>
            <person name="Liu H."/>
            <person name="Masuda S."/>
            <person name="Mauel C."/>
            <person name="Medigue C."/>
            <person name="Medina N."/>
            <person name="Mellado R.P."/>
            <person name="Mizuno M."/>
            <person name="Moestl D."/>
            <person name="Nakai S."/>
            <person name="Noback M."/>
            <person name="Noone D."/>
            <person name="O'Reilly M."/>
            <person name="Ogawa K."/>
            <person name="Ogiwara A."/>
            <person name="Oudega B."/>
            <person name="Park S.-H."/>
            <person name="Parro V."/>
            <person name="Pohl T.M."/>
            <person name="Portetelle D."/>
            <person name="Porwollik S."/>
            <person name="Prescott A.M."/>
            <person name="Presecan E."/>
            <person name="Pujic P."/>
            <person name="Purnelle B."/>
            <person name="Rapoport G."/>
            <person name="Rey M."/>
            <person name="Reynolds S."/>
            <person name="Rieger M."/>
            <person name="Rivolta C."/>
            <person name="Rocha E."/>
            <person name="Roche B."/>
            <person name="Rose M."/>
            <person name="Sadaie Y."/>
            <person name="Sato T."/>
            <person name="Scanlan E."/>
            <person name="Schleich S."/>
            <person name="Schroeter R."/>
            <person name="Scoffone F."/>
            <person name="Sekiguchi J."/>
            <person name="Sekowska A."/>
            <person name="Seror S.J."/>
            <person name="Serror P."/>
            <person name="Shin B.-S."/>
            <person name="Soldo B."/>
            <person name="Sorokin A."/>
            <person name="Tacconi E."/>
            <person name="Takagi T."/>
            <person name="Takahashi H."/>
            <person name="Takemaru K."/>
            <person name="Takeuchi M."/>
            <person name="Tamakoshi A."/>
            <person name="Tanaka T."/>
            <person name="Terpstra P."/>
            <person name="Tognoni A."/>
            <person name="Tosato V."/>
            <person name="Uchiyama S."/>
            <person name="Vandenbol M."/>
            <person name="Vannier F."/>
            <person name="Vassarotti A."/>
            <person name="Viari A."/>
            <person name="Wambutt R."/>
            <person name="Wedler E."/>
            <person name="Wedler H."/>
            <person name="Weitzenegger T."/>
            <person name="Winters P."/>
            <person name="Wipat A."/>
            <person name="Yamamoto H."/>
            <person name="Yamane K."/>
            <person name="Yasumoto K."/>
            <person name="Yata K."/>
            <person name="Yoshida K."/>
            <person name="Yoshikawa H.-F."/>
            <person name="Zumstein E."/>
            <person name="Yoshikawa H."/>
            <person name="Danchin A."/>
        </authorList>
    </citation>
    <scope>NUCLEOTIDE SEQUENCE [LARGE SCALE GENOMIC DNA]</scope>
    <source>
        <strain>168</strain>
    </source>
</reference>
<reference key="2">
    <citation type="journal article" date="2001" name="Mol. Microbiol.">
        <title>A new family of aspartyl phosphate phosphatases targeting the sporulation transcription factor Spo0A of Bacillus subtilis.</title>
        <authorList>
            <person name="Perego M."/>
        </authorList>
    </citation>
    <scope>FUNCTION</scope>
    <scope>INDUCTION</scope>
</reference>
<feature type="chain" id="PRO_0000359938" description="Aspartyl-phosphate phosphatase YnzD">
    <location>
        <begin position="1"/>
        <end position="57"/>
    </location>
</feature>
<name>YNZD_BACSU</name>
<accession>O31819</accession>
<sequence length="57" mass="6683">MIREHLLKEIEKKRAELLQIVMANGMTSHITIELSQELDHLLIQYQKQRLRAVAGDE</sequence>
<organism>
    <name type="scientific">Bacillus subtilis (strain 168)</name>
    <dbReference type="NCBI Taxonomy" id="224308"/>
    <lineage>
        <taxon>Bacteria</taxon>
        <taxon>Bacillati</taxon>
        <taxon>Bacillota</taxon>
        <taxon>Bacilli</taxon>
        <taxon>Bacillales</taxon>
        <taxon>Bacillaceae</taxon>
        <taxon>Bacillus</taxon>
    </lineage>
</organism>
<keyword id="KW-0378">Hydrolase</keyword>
<keyword id="KW-1185">Reference proteome</keyword>
<keyword id="KW-0749">Sporulation</keyword>
<proteinExistence type="evidence at transcript level"/>
<protein>
    <recommendedName>
        <fullName>Aspartyl-phosphate phosphatase YnzD</fullName>
        <ecNumber>3.1.3.-</ecNumber>
    </recommendedName>
    <alternativeName>
        <fullName>Stage 0 sporulation regulatory protein YnzD</fullName>
    </alternativeName>
</protein>
<comment type="function">
    <text evidence="1">Aspartyl-phosphate phosphatase which specifically dephosphorylates the sporulation transcription factor Spo0A-P and negatively regulates the sporulation initiation pathway in order to control the proper timing of sporulation.</text>
</comment>
<comment type="induction">
    <text evidence="1">During exponential phase and in conditions antithetical to sporulation.</text>
</comment>
<comment type="similarity">
    <text evidence="2">Belongs to the spo0E family.</text>
</comment>
<gene>
    <name type="primary">ynzD</name>
    <name type="ordered locus">BSU17920</name>
</gene>